<name>GCH1_STRSY</name>
<accession>A4VVH1</accession>
<sequence length="187" mass="21251">MSKQEQIEQTIYQLLELLGEDPNREGLLDTPKRVAKMYLEMFNGLEEDPKDQFTAVFSEGHEEVVLVKDIPFHSMCEHHLVPFYGIAHVAYIPSKGRVTGLSKLARAVEVASRRPQLQERLTHQVAHALQDALEPEGVFVMVEAEHMCMSMRGIRKPGSKTVTTVALGKYKEDAILRRELLSMIHNK</sequence>
<reference key="1">
    <citation type="journal article" date="2007" name="PLoS ONE">
        <title>A glimpse of streptococcal toxic shock syndrome from comparative genomics of S. suis 2 Chinese isolates.</title>
        <authorList>
            <person name="Chen C."/>
            <person name="Tang J."/>
            <person name="Dong W."/>
            <person name="Wang C."/>
            <person name="Feng Y."/>
            <person name="Wang J."/>
            <person name="Zheng F."/>
            <person name="Pan X."/>
            <person name="Liu D."/>
            <person name="Li M."/>
            <person name="Song Y."/>
            <person name="Zhu X."/>
            <person name="Sun H."/>
            <person name="Feng T."/>
            <person name="Guo Z."/>
            <person name="Ju A."/>
            <person name="Ge J."/>
            <person name="Dong Y."/>
            <person name="Sun W."/>
            <person name="Jiang Y."/>
            <person name="Wang J."/>
            <person name="Yan J."/>
            <person name="Yang H."/>
            <person name="Wang X."/>
            <person name="Gao G.F."/>
            <person name="Yang R."/>
            <person name="Wang J."/>
            <person name="Yu J."/>
        </authorList>
    </citation>
    <scope>NUCLEOTIDE SEQUENCE [LARGE SCALE GENOMIC DNA]</scope>
    <source>
        <strain>05ZYH33</strain>
    </source>
</reference>
<evidence type="ECO:0000250" key="1"/>
<evidence type="ECO:0000255" key="2">
    <source>
        <dbReference type="HAMAP-Rule" id="MF_00223"/>
    </source>
</evidence>
<comment type="catalytic activity">
    <reaction evidence="2">
        <text>GTP + H2O = 7,8-dihydroneopterin 3'-triphosphate + formate + H(+)</text>
        <dbReference type="Rhea" id="RHEA:17473"/>
        <dbReference type="ChEBI" id="CHEBI:15377"/>
        <dbReference type="ChEBI" id="CHEBI:15378"/>
        <dbReference type="ChEBI" id="CHEBI:15740"/>
        <dbReference type="ChEBI" id="CHEBI:37565"/>
        <dbReference type="ChEBI" id="CHEBI:58462"/>
        <dbReference type="EC" id="3.5.4.16"/>
    </reaction>
</comment>
<comment type="pathway">
    <text evidence="2">Cofactor biosynthesis; 7,8-dihydroneopterin triphosphate biosynthesis; 7,8-dihydroneopterin triphosphate from GTP: step 1/1.</text>
</comment>
<comment type="subunit">
    <text evidence="1">Toroid-shaped homodecamer, composed of two pentamers of five dimers.</text>
</comment>
<comment type="similarity">
    <text evidence="2">Belongs to the GTP cyclohydrolase I family.</text>
</comment>
<feature type="chain" id="PRO_1000043749" description="GTP cyclohydrolase 1">
    <location>
        <begin position="1"/>
        <end position="187"/>
    </location>
</feature>
<feature type="binding site" evidence="2">
    <location>
        <position position="76"/>
    </location>
    <ligand>
        <name>Zn(2+)</name>
        <dbReference type="ChEBI" id="CHEBI:29105"/>
    </ligand>
</feature>
<feature type="binding site" evidence="2">
    <location>
        <position position="79"/>
    </location>
    <ligand>
        <name>Zn(2+)</name>
        <dbReference type="ChEBI" id="CHEBI:29105"/>
    </ligand>
</feature>
<feature type="binding site" evidence="2">
    <location>
        <position position="148"/>
    </location>
    <ligand>
        <name>Zn(2+)</name>
        <dbReference type="ChEBI" id="CHEBI:29105"/>
    </ligand>
</feature>
<gene>
    <name evidence="2" type="primary">folE</name>
    <name type="ordered locus">SSU05_1144</name>
</gene>
<keyword id="KW-0342">GTP-binding</keyword>
<keyword id="KW-0378">Hydrolase</keyword>
<keyword id="KW-0479">Metal-binding</keyword>
<keyword id="KW-0547">Nucleotide-binding</keyword>
<keyword id="KW-0554">One-carbon metabolism</keyword>
<keyword id="KW-0862">Zinc</keyword>
<proteinExistence type="inferred from homology"/>
<dbReference type="EC" id="3.5.4.16" evidence="2"/>
<dbReference type="EMBL" id="CP000407">
    <property type="protein sequence ID" value="ABP90110.1"/>
    <property type="molecule type" value="Genomic_DNA"/>
</dbReference>
<dbReference type="SMR" id="A4VVH1"/>
<dbReference type="STRING" id="391295.SSU05_1144"/>
<dbReference type="KEGG" id="ssu:SSU05_1144"/>
<dbReference type="eggNOG" id="COG0302">
    <property type="taxonomic scope" value="Bacteria"/>
</dbReference>
<dbReference type="HOGENOM" id="CLU_049768_3_3_9"/>
<dbReference type="UniPathway" id="UPA00848">
    <property type="reaction ID" value="UER00151"/>
</dbReference>
<dbReference type="GO" id="GO:0005737">
    <property type="term" value="C:cytoplasm"/>
    <property type="evidence" value="ECO:0007669"/>
    <property type="project" value="TreeGrafter"/>
</dbReference>
<dbReference type="GO" id="GO:0005525">
    <property type="term" value="F:GTP binding"/>
    <property type="evidence" value="ECO:0007669"/>
    <property type="project" value="UniProtKB-KW"/>
</dbReference>
<dbReference type="GO" id="GO:0003934">
    <property type="term" value="F:GTP cyclohydrolase I activity"/>
    <property type="evidence" value="ECO:0007669"/>
    <property type="project" value="UniProtKB-UniRule"/>
</dbReference>
<dbReference type="GO" id="GO:0008270">
    <property type="term" value="F:zinc ion binding"/>
    <property type="evidence" value="ECO:0007669"/>
    <property type="project" value="UniProtKB-UniRule"/>
</dbReference>
<dbReference type="GO" id="GO:0006730">
    <property type="term" value="P:one-carbon metabolic process"/>
    <property type="evidence" value="ECO:0007669"/>
    <property type="project" value="UniProtKB-UniRule"/>
</dbReference>
<dbReference type="GO" id="GO:0006729">
    <property type="term" value="P:tetrahydrobiopterin biosynthetic process"/>
    <property type="evidence" value="ECO:0007669"/>
    <property type="project" value="TreeGrafter"/>
</dbReference>
<dbReference type="GO" id="GO:0046654">
    <property type="term" value="P:tetrahydrofolate biosynthetic process"/>
    <property type="evidence" value="ECO:0007669"/>
    <property type="project" value="UniProtKB-UniRule"/>
</dbReference>
<dbReference type="FunFam" id="1.10.286.10:FF:000001">
    <property type="entry name" value="GTP cyclohydrolase 1"/>
    <property type="match status" value="1"/>
</dbReference>
<dbReference type="FunFam" id="3.30.1130.10:FF:000001">
    <property type="entry name" value="GTP cyclohydrolase 1"/>
    <property type="match status" value="1"/>
</dbReference>
<dbReference type="Gene3D" id="1.10.286.10">
    <property type="match status" value="1"/>
</dbReference>
<dbReference type="Gene3D" id="3.30.1130.10">
    <property type="match status" value="1"/>
</dbReference>
<dbReference type="HAMAP" id="MF_00223">
    <property type="entry name" value="FolE"/>
    <property type="match status" value="1"/>
</dbReference>
<dbReference type="InterPro" id="IPR043133">
    <property type="entry name" value="GTP-CH-I_C/QueF"/>
</dbReference>
<dbReference type="InterPro" id="IPR043134">
    <property type="entry name" value="GTP-CH-I_N"/>
</dbReference>
<dbReference type="InterPro" id="IPR001474">
    <property type="entry name" value="GTP_CycHdrlase_I"/>
</dbReference>
<dbReference type="InterPro" id="IPR018234">
    <property type="entry name" value="GTP_CycHdrlase_I_CS"/>
</dbReference>
<dbReference type="InterPro" id="IPR020602">
    <property type="entry name" value="GTP_CycHdrlase_I_dom"/>
</dbReference>
<dbReference type="NCBIfam" id="TIGR00063">
    <property type="entry name" value="folE"/>
    <property type="match status" value="1"/>
</dbReference>
<dbReference type="NCBIfam" id="NF006825">
    <property type="entry name" value="PRK09347.1-2"/>
    <property type="match status" value="1"/>
</dbReference>
<dbReference type="NCBIfam" id="NF006826">
    <property type="entry name" value="PRK09347.1-3"/>
    <property type="match status" value="1"/>
</dbReference>
<dbReference type="PANTHER" id="PTHR11109:SF7">
    <property type="entry name" value="GTP CYCLOHYDROLASE 1"/>
    <property type="match status" value="1"/>
</dbReference>
<dbReference type="PANTHER" id="PTHR11109">
    <property type="entry name" value="GTP CYCLOHYDROLASE I"/>
    <property type="match status" value="1"/>
</dbReference>
<dbReference type="Pfam" id="PF01227">
    <property type="entry name" value="GTP_cyclohydroI"/>
    <property type="match status" value="1"/>
</dbReference>
<dbReference type="SUPFAM" id="SSF55620">
    <property type="entry name" value="Tetrahydrobiopterin biosynthesis enzymes-like"/>
    <property type="match status" value="1"/>
</dbReference>
<dbReference type="PROSITE" id="PS00859">
    <property type="entry name" value="GTP_CYCLOHYDROL_1_1"/>
    <property type="match status" value="1"/>
</dbReference>
<dbReference type="PROSITE" id="PS00860">
    <property type="entry name" value="GTP_CYCLOHYDROL_1_2"/>
    <property type="match status" value="1"/>
</dbReference>
<organism>
    <name type="scientific">Streptococcus suis (strain 05ZYH33)</name>
    <dbReference type="NCBI Taxonomy" id="391295"/>
    <lineage>
        <taxon>Bacteria</taxon>
        <taxon>Bacillati</taxon>
        <taxon>Bacillota</taxon>
        <taxon>Bacilli</taxon>
        <taxon>Lactobacillales</taxon>
        <taxon>Streptococcaceae</taxon>
        <taxon>Streptococcus</taxon>
    </lineage>
</organism>
<protein>
    <recommendedName>
        <fullName evidence="2">GTP cyclohydrolase 1</fullName>
        <ecNumber evidence="2">3.5.4.16</ecNumber>
    </recommendedName>
    <alternativeName>
        <fullName evidence="2">GTP cyclohydrolase I</fullName>
        <shortName evidence="2">GTP-CH-I</shortName>
    </alternativeName>
</protein>